<sequence length="101" mass="11706">MAKLALIEREKKRARLVAKFAAKREALKAIVEDQSKSEEERYEARLELQQLPRNANPTRQRNRCAITGRPRGTFRKFGLARNKIREIAFRGEIPGLTKASW</sequence>
<gene>
    <name evidence="1" type="primary">rpsN</name>
    <name type="ordered locus">Bcen_2746</name>
</gene>
<name>RS14_BURO1</name>
<evidence type="ECO:0000255" key="1">
    <source>
        <dbReference type="HAMAP-Rule" id="MF_00537"/>
    </source>
</evidence>
<evidence type="ECO:0000305" key="2"/>
<accession>Q1BRW1</accession>
<feature type="chain" id="PRO_1000128327" description="Small ribosomal subunit protein uS14">
    <location>
        <begin position="1"/>
        <end position="101"/>
    </location>
</feature>
<comment type="function">
    <text evidence="1">Binds 16S rRNA, required for the assembly of 30S particles and may also be responsible for determining the conformation of the 16S rRNA at the A site.</text>
</comment>
<comment type="subunit">
    <text evidence="1">Part of the 30S ribosomal subunit. Contacts proteins S3 and S10.</text>
</comment>
<comment type="similarity">
    <text evidence="1">Belongs to the universal ribosomal protein uS14 family.</text>
</comment>
<protein>
    <recommendedName>
        <fullName evidence="1">Small ribosomal subunit protein uS14</fullName>
    </recommendedName>
    <alternativeName>
        <fullName evidence="2">30S ribosomal protein S14</fullName>
    </alternativeName>
</protein>
<dbReference type="EMBL" id="CP000378">
    <property type="protein sequence ID" value="ABF77644.1"/>
    <property type="molecule type" value="Genomic_DNA"/>
</dbReference>
<dbReference type="SMR" id="Q1BRW1"/>
<dbReference type="HOGENOM" id="CLU_139869_0_1_4"/>
<dbReference type="GO" id="GO:0005737">
    <property type="term" value="C:cytoplasm"/>
    <property type="evidence" value="ECO:0007669"/>
    <property type="project" value="UniProtKB-ARBA"/>
</dbReference>
<dbReference type="GO" id="GO:0015935">
    <property type="term" value="C:small ribosomal subunit"/>
    <property type="evidence" value="ECO:0007669"/>
    <property type="project" value="TreeGrafter"/>
</dbReference>
<dbReference type="GO" id="GO:0019843">
    <property type="term" value="F:rRNA binding"/>
    <property type="evidence" value="ECO:0007669"/>
    <property type="project" value="UniProtKB-UniRule"/>
</dbReference>
<dbReference type="GO" id="GO:0003735">
    <property type="term" value="F:structural constituent of ribosome"/>
    <property type="evidence" value="ECO:0007669"/>
    <property type="project" value="InterPro"/>
</dbReference>
<dbReference type="GO" id="GO:0006412">
    <property type="term" value="P:translation"/>
    <property type="evidence" value="ECO:0007669"/>
    <property type="project" value="UniProtKB-UniRule"/>
</dbReference>
<dbReference type="FunFam" id="1.10.287.1480:FF:000001">
    <property type="entry name" value="30S ribosomal protein S14"/>
    <property type="match status" value="1"/>
</dbReference>
<dbReference type="Gene3D" id="1.10.287.1480">
    <property type="match status" value="1"/>
</dbReference>
<dbReference type="HAMAP" id="MF_00537">
    <property type="entry name" value="Ribosomal_uS14_1"/>
    <property type="match status" value="1"/>
</dbReference>
<dbReference type="InterPro" id="IPR001209">
    <property type="entry name" value="Ribosomal_uS14"/>
</dbReference>
<dbReference type="InterPro" id="IPR023036">
    <property type="entry name" value="Ribosomal_uS14_bac/plastid"/>
</dbReference>
<dbReference type="NCBIfam" id="NF006477">
    <property type="entry name" value="PRK08881.1"/>
    <property type="match status" value="1"/>
</dbReference>
<dbReference type="PANTHER" id="PTHR19836">
    <property type="entry name" value="30S RIBOSOMAL PROTEIN S14"/>
    <property type="match status" value="1"/>
</dbReference>
<dbReference type="PANTHER" id="PTHR19836:SF19">
    <property type="entry name" value="SMALL RIBOSOMAL SUBUNIT PROTEIN US14M"/>
    <property type="match status" value="1"/>
</dbReference>
<dbReference type="Pfam" id="PF00253">
    <property type="entry name" value="Ribosomal_S14"/>
    <property type="match status" value="1"/>
</dbReference>
<dbReference type="SUPFAM" id="SSF57716">
    <property type="entry name" value="Glucocorticoid receptor-like (DNA-binding domain)"/>
    <property type="match status" value="1"/>
</dbReference>
<organism>
    <name type="scientific">Burkholderia orbicola (strain AU 1054)</name>
    <dbReference type="NCBI Taxonomy" id="331271"/>
    <lineage>
        <taxon>Bacteria</taxon>
        <taxon>Pseudomonadati</taxon>
        <taxon>Pseudomonadota</taxon>
        <taxon>Betaproteobacteria</taxon>
        <taxon>Burkholderiales</taxon>
        <taxon>Burkholderiaceae</taxon>
        <taxon>Burkholderia</taxon>
        <taxon>Burkholderia cepacia complex</taxon>
        <taxon>Burkholderia orbicola</taxon>
    </lineage>
</organism>
<reference key="1">
    <citation type="submission" date="2006-05" db="EMBL/GenBank/DDBJ databases">
        <title>Complete sequence of chromosome 1 of Burkholderia cenocepacia AU 1054.</title>
        <authorList>
            <consortium name="US DOE Joint Genome Institute"/>
            <person name="Copeland A."/>
            <person name="Lucas S."/>
            <person name="Lapidus A."/>
            <person name="Barry K."/>
            <person name="Detter J.C."/>
            <person name="Glavina del Rio T."/>
            <person name="Hammon N."/>
            <person name="Israni S."/>
            <person name="Dalin E."/>
            <person name="Tice H."/>
            <person name="Pitluck S."/>
            <person name="Chain P."/>
            <person name="Malfatti S."/>
            <person name="Shin M."/>
            <person name="Vergez L."/>
            <person name="Schmutz J."/>
            <person name="Larimer F."/>
            <person name="Land M."/>
            <person name="Hauser L."/>
            <person name="Kyrpides N."/>
            <person name="Lykidis A."/>
            <person name="LiPuma J.J."/>
            <person name="Konstantinidis K."/>
            <person name="Tiedje J.M."/>
            <person name="Richardson P."/>
        </authorList>
    </citation>
    <scope>NUCLEOTIDE SEQUENCE [LARGE SCALE GENOMIC DNA]</scope>
    <source>
        <strain>AU 1054</strain>
    </source>
</reference>
<keyword id="KW-0687">Ribonucleoprotein</keyword>
<keyword id="KW-0689">Ribosomal protein</keyword>
<keyword id="KW-0694">RNA-binding</keyword>
<keyword id="KW-0699">rRNA-binding</keyword>
<proteinExistence type="inferred from homology"/>